<name>SIK1_ORYSJ</name>
<reference key="1">
    <citation type="journal article" date="2010" name="Plant J.">
        <title>Receptor-like kinase OsSIK1 improves drought and salt stress tolerance in rice (Oryza sativa) plants.</title>
        <authorList>
            <person name="Ouyang S.Q."/>
            <person name="Liu Y.F."/>
            <person name="Liu P."/>
            <person name="Lei G."/>
            <person name="He S.J."/>
            <person name="Ma B."/>
            <person name="Zhang W.K."/>
            <person name="Zhang J.S."/>
            <person name="Chen S.Y."/>
        </authorList>
    </citation>
    <scope>NUCLEOTIDE SEQUENCE [MRNA] (ISOFORM 1)</scope>
    <scope>FUNCTION</scope>
    <scope>TISSUE SPECIFICITY</scope>
    <scope>INDUCTION</scope>
    <scope>AUTOPHOSPHORYLATION</scope>
    <scope>DISRUPTION PHENOTYPE</scope>
    <source>
        <strain>cv. Taipei 309</strain>
    </source>
</reference>
<reference key="2">
    <citation type="submission" date="2003-06" db="EMBL/GenBank/DDBJ databases">
        <title>Isolation of a transmembrane protein kinase from rice.</title>
        <authorList>
            <person name="Yao Q."/>
            <person name="Peng R."/>
            <person name="Xiong A."/>
        </authorList>
    </citation>
    <scope>NUCLEOTIDE SEQUENCE [MRNA] (ISOFORM 2)</scope>
</reference>
<reference key="3">
    <citation type="journal article" date="2005" name="Nature">
        <title>The map-based sequence of the rice genome.</title>
        <authorList>
            <consortium name="International rice genome sequencing project (IRGSP)"/>
        </authorList>
    </citation>
    <scope>NUCLEOTIDE SEQUENCE [LARGE SCALE GENOMIC DNA]</scope>
    <source>
        <strain>cv. Nipponbare</strain>
    </source>
</reference>
<reference key="4">
    <citation type="journal article" date="2008" name="Nucleic Acids Res.">
        <title>The rice annotation project database (RAP-DB): 2008 update.</title>
        <authorList>
            <consortium name="The rice annotation project (RAP)"/>
        </authorList>
    </citation>
    <scope>GENOME REANNOTATION</scope>
    <source>
        <strain>cv. Nipponbare</strain>
    </source>
</reference>
<reference key="5">
    <citation type="journal article" date="2013" name="Rice">
        <title>Improvement of the Oryza sativa Nipponbare reference genome using next generation sequence and optical map data.</title>
        <authorList>
            <person name="Kawahara Y."/>
            <person name="de la Bastide M."/>
            <person name="Hamilton J.P."/>
            <person name="Kanamori H."/>
            <person name="McCombie W.R."/>
            <person name="Ouyang S."/>
            <person name="Schwartz D.C."/>
            <person name="Tanaka T."/>
            <person name="Wu J."/>
            <person name="Zhou S."/>
            <person name="Childs K.L."/>
            <person name="Davidson R.M."/>
            <person name="Lin H."/>
            <person name="Quesada-Ocampo L."/>
            <person name="Vaillancourt B."/>
            <person name="Sakai H."/>
            <person name="Lee S.S."/>
            <person name="Kim J."/>
            <person name="Numa H."/>
            <person name="Itoh T."/>
            <person name="Buell C.R."/>
            <person name="Matsumoto T."/>
        </authorList>
    </citation>
    <scope>GENOME REANNOTATION</scope>
    <source>
        <strain>cv. Nipponbare</strain>
    </source>
</reference>
<reference key="6">
    <citation type="journal article" date="2015" name="Nat. Biotechnol.">
        <title>Overexpression of receptor-like kinase ERECTA improves thermotolerance in rice and tomato.</title>
        <authorList>
            <person name="Shen H."/>
            <person name="Zhong X."/>
            <person name="Zhao F."/>
            <person name="Wang Y."/>
            <person name="Yan B."/>
            <person name="Li Q."/>
            <person name="Chen G."/>
            <person name="Mao B."/>
            <person name="Wang J."/>
            <person name="Li Y."/>
            <person name="Xiao G."/>
            <person name="He Y."/>
            <person name="Xiao H."/>
            <person name="Li J."/>
            <person name="He Z."/>
        </authorList>
    </citation>
    <scope>FUNCTION</scope>
</reference>
<organism>
    <name type="scientific">Oryza sativa subsp. japonica</name>
    <name type="common">Rice</name>
    <dbReference type="NCBI Taxonomy" id="39947"/>
    <lineage>
        <taxon>Eukaryota</taxon>
        <taxon>Viridiplantae</taxon>
        <taxon>Streptophyta</taxon>
        <taxon>Embryophyta</taxon>
        <taxon>Tracheophyta</taxon>
        <taxon>Spermatophyta</taxon>
        <taxon>Magnoliopsida</taxon>
        <taxon>Liliopsida</taxon>
        <taxon>Poales</taxon>
        <taxon>Poaceae</taxon>
        <taxon>BOP clade</taxon>
        <taxon>Oryzoideae</taxon>
        <taxon>Oryzeae</taxon>
        <taxon>Oryzinae</taxon>
        <taxon>Oryza</taxon>
        <taxon>Oryza sativa</taxon>
    </lineage>
</organism>
<proteinExistence type="evidence at protein level"/>
<evidence type="ECO:0000255" key="1"/>
<evidence type="ECO:0000255" key="2">
    <source>
        <dbReference type="PROSITE-ProRule" id="PRU00159"/>
    </source>
</evidence>
<evidence type="ECO:0000255" key="3">
    <source>
        <dbReference type="PROSITE-ProRule" id="PRU00498"/>
    </source>
</evidence>
<evidence type="ECO:0000269" key="4">
    <source>
    </source>
</evidence>
<evidence type="ECO:0000269" key="5">
    <source>
    </source>
</evidence>
<evidence type="ECO:0000303" key="6">
    <source>
    </source>
</evidence>
<evidence type="ECO:0000303" key="7">
    <source>
    </source>
</evidence>
<evidence type="ECO:0000305" key="8"/>
<evidence type="ECO:0000312" key="9">
    <source>
        <dbReference type="EMBL" id="AAQ01160.1"/>
    </source>
</evidence>
<evidence type="ECO:0000312" key="10">
    <source>
        <dbReference type="EMBL" id="BAD44800.1"/>
    </source>
</evidence>
<evidence type="ECO:0000312" key="11">
    <source>
        <dbReference type="EMBL" id="BAD67663.1"/>
    </source>
</evidence>
<evidence type="ECO:0000312" key="12">
    <source>
        <dbReference type="EMBL" id="BAS95971.1"/>
    </source>
</evidence>
<protein>
    <recommendedName>
        <fullName evidence="8">LRR receptor-like serine/threonine-protein kinase SIK1</fullName>
        <ecNumber evidence="4">2.7.11.1</ecNumber>
    </recommendedName>
    <alternativeName>
        <fullName evidence="7">ERECTA homolog 2</fullName>
        <shortName evidence="7">ER homolog 2</shortName>
        <shortName evidence="7">OsER2</shortName>
    </alternativeName>
    <alternativeName>
        <fullName evidence="6">Stress-induced protein kinase 1</fullName>
        <shortName evidence="6">OsSIK1</shortName>
    </alternativeName>
</protein>
<feature type="signal peptide" evidence="1">
    <location>
        <begin position="1"/>
        <end position="24"/>
    </location>
</feature>
<feature type="chain" id="PRO_5013532896" description="LRR receptor-like serine/threonine-protein kinase SIK1" evidence="1">
    <location>
        <begin position="25"/>
        <end position="980"/>
    </location>
</feature>
<feature type="topological domain" description="Extracellular" evidence="8">
    <location>
        <begin position="25"/>
        <end position="588"/>
    </location>
</feature>
<feature type="transmembrane region" description="Helical" evidence="1">
    <location>
        <begin position="589"/>
        <end position="609"/>
    </location>
</feature>
<feature type="topological domain" description="Cytoplasmic" evidence="8">
    <location>
        <begin position="610"/>
        <end position="980"/>
    </location>
</feature>
<feature type="repeat" description="LRR 1" evidence="1">
    <location>
        <begin position="75"/>
        <end position="98"/>
    </location>
</feature>
<feature type="repeat" description="LRR 2" evidence="1">
    <location>
        <begin position="99"/>
        <end position="122"/>
    </location>
</feature>
<feature type="repeat" description="LRR 3" evidence="1">
    <location>
        <begin position="124"/>
        <end position="146"/>
    </location>
</feature>
<feature type="repeat" description="LRR 4" evidence="1">
    <location>
        <begin position="147"/>
        <end position="170"/>
    </location>
</feature>
<feature type="repeat" description="LRR 5" evidence="1">
    <location>
        <begin position="171"/>
        <end position="194"/>
    </location>
</feature>
<feature type="repeat" description="LRR 6" evidence="1">
    <location>
        <begin position="196"/>
        <end position="218"/>
    </location>
</feature>
<feature type="repeat" description="LRR 7" evidence="1">
    <location>
        <begin position="219"/>
        <end position="242"/>
    </location>
</feature>
<feature type="repeat" description="LRR 8" evidence="1">
    <location>
        <begin position="243"/>
        <end position="265"/>
    </location>
</feature>
<feature type="repeat" description="LRR 9" evidence="1">
    <location>
        <begin position="266"/>
        <end position="289"/>
    </location>
</feature>
<feature type="repeat" description="LRR 10" evidence="1">
    <location>
        <begin position="290"/>
        <end position="312"/>
    </location>
</feature>
<feature type="repeat" description="LRR 11" evidence="1">
    <location>
        <begin position="314"/>
        <end position="337"/>
    </location>
</feature>
<feature type="repeat" description="LRR 12" evidence="1">
    <location>
        <begin position="338"/>
        <end position="361"/>
    </location>
</feature>
<feature type="repeat" description="LRR 13" evidence="1">
    <location>
        <begin position="362"/>
        <end position="385"/>
    </location>
</feature>
<feature type="repeat" description="LRR 14" evidence="1">
    <location>
        <begin position="387"/>
        <end position="408"/>
    </location>
</feature>
<feature type="repeat" description="LRR 15" evidence="1">
    <location>
        <begin position="409"/>
        <end position="433"/>
    </location>
</feature>
<feature type="repeat" description="LRR 16" evidence="1">
    <location>
        <begin position="435"/>
        <end position="457"/>
    </location>
</feature>
<feature type="repeat" description="LRR 17" evidence="1">
    <location>
        <begin position="458"/>
        <end position="480"/>
    </location>
</feature>
<feature type="repeat" description="LRR 18" evidence="1">
    <location>
        <begin position="481"/>
        <end position="505"/>
    </location>
</feature>
<feature type="repeat" description="LRR 19" evidence="1">
    <location>
        <begin position="507"/>
        <end position="529"/>
    </location>
</feature>
<feature type="repeat" description="LRR 20" evidence="1">
    <location>
        <begin position="531"/>
        <end position="554"/>
    </location>
</feature>
<feature type="domain" description="Protein kinase" evidence="2">
    <location>
        <begin position="653"/>
        <end position="923"/>
    </location>
</feature>
<feature type="active site" description="Proton acceptor" evidence="2">
    <location>
        <position position="778"/>
    </location>
</feature>
<feature type="binding site" evidence="2">
    <location>
        <begin position="659"/>
        <end position="667"/>
    </location>
    <ligand>
        <name>ATP</name>
        <dbReference type="ChEBI" id="CHEBI:30616"/>
    </ligand>
</feature>
<feature type="binding site" evidence="2">
    <location>
        <position position="681"/>
    </location>
    <ligand>
        <name>ATP</name>
        <dbReference type="ChEBI" id="CHEBI:30616"/>
    </ligand>
</feature>
<feature type="glycosylation site" description="N-linked (GlcNAc...) asparagine" evidence="3">
    <location>
        <position position="72"/>
    </location>
</feature>
<feature type="glycosylation site" description="N-linked (GlcNAc...) asparagine" evidence="3">
    <location>
        <position position="81"/>
    </location>
</feature>
<feature type="glycosylation site" description="N-linked (GlcNAc...) asparagine" evidence="3">
    <location>
        <position position="230"/>
    </location>
</feature>
<feature type="glycosylation site" description="N-linked (GlcNAc...) asparagine" evidence="3">
    <location>
        <position position="241"/>
    </location>
</feature>
<feature type="glycosylation site" description="N-linked (GlcNAc...) asparagine" evidence="3">
    <location>
        <position position="312"/>
    </location>
</feature>
<feature type="glycosylation site" description="N-linked (GlcNAc...) asparagine" evidence="3">
    <location>
        <position position="336"/>
    </location>
</feature>
<feature type="glycosylation site" description="N-linked (GlcNAc...) asparagine" evidence="3">
    <location>
        <position position="381"/>
    </location>
</feature>
<feature type="glycosylation site" description="N-linked (GlcNAc...) asparagine" evidence="3">
    <location>
        <position position="399"/>
    </location>
</feature>
<feature type="glycosylation site" description="N-linked (GlcNAc...) asparagine" evidence="3">
    <location>
        <position position="416"/>
    </location>
</feature>
<feature type="glycosylation site" description="N-linked (GlcNAc...) asparagine" evidence="3">
    <location>
        <position position="464"/>
    </location>
</feature>
<feature type="glycosylation site" description="N-linked (GlcNAc...) asparagine" evidence="3">
    <location>
        <position position="493"/>
    </location>
</feature>
<feature type="glycosylation site" description="N-linked (GlcNAc...) asparagine" evidence="3">
    <location>
        <position position="536"/>
    </location>
</feature>
<feature type="glycosylation site" description="N-linked (GlcNAc...) asparagine" evidence="3">
    <location>
        <position position="541"/>
    </location>
</feature>
<feature type="glycosylation site" description="N-linked (GlcNAc...) asparagine" evidence="3">
    <location>
        <position position="551"/>
    </location>
</feature>
<feature type="glycosylation site" description="N-linked (GlcNAc...) asparagine" evidence="3">
    <location>
        <position position="584"/>
    </location>
</feature>
<feature type="splice variant" id="VSP_060408" description="In isoform 2.">
    <original>NLSYNNLSGHVPMAKNFSKFPME</original>
    <variation>AFQEFVIQQFIWTCPDGKELLEIPNGKHLLISDCNQYINHKC</variation>
    <location>
        <begin position="536"/>
        <end position="558"/>
    </location>
</feature>
<feature type="sequence conflict" description="In Ref. 1; ACY07616." evidence="8" ref="1">
    <original>TCD</original>
    <variation>SCE</variation>
    <location>
        <begin position="69"/>
        <end position="71"/>
    </location>
</feature>
<feature type="sequence conflict" description="In Ref. 1; ACY07616." evidence="8" ref="1">
    <original>N</original>
    <variation>D</variation>
    <location>
        <position position="84"/>
    </location>
</feature>
<feature type="sequence conflict" description="In Ref. 1; ACY07616." evidence="8" ref="1">
    <original>T</original>
    <variation>S</variation>
    <location>
        <position position="112"/>
    </location>
</feature>
<feature type="sequence conflict" description="In Ref. 1; ACY07616." evidence="8" ref="1">
    <original>K</original>
    <variation>Q</variation>
    <location>
        <position position="126"/>
    </location>
</feature>
<feature type="sequence conflict" description="In Ref. 1; ACY07616." evidence="8" ref="1">
    <original>L</original>
    <variation>P</variation>
    <location>
        <position position="221"/>
    </location>
</feature>
<feature type="sequence conflict" description="In Ref. 1; ACY07616." evidence="8" ref="1">
    <original>V</original>
    <variation>I</variation>
    <location>
        <position position="450"/>
    </location>
</feature>
<feature type="sequence conflict" description="In Ref. 1; ACY07616." evidence="8" ref="1">
    <original>L</original>
    <variation>P</variation>
    <location>
        <position position="461"/>
    </location>
</feature>
<feature type="sequence conflict" description="In Ref. 1; ACY07616." evidence="8" ref="1">
    <original>P</original>
    <variation>V</variation>
    <location>
        <position position="473"/>
    </location>
</feature>
<feature type="sequence conflict" description="In Ref. 1; ACY07616." evidence="8" ref="1">
    <original>N</original>
    <variation>D</variation>
    <location>
        <position position="493"/>
    </location>
</feature>
<feature type="sequence conflict" description="In Ref. 1; ACY07616." evidence="8" ref="1">
    <original>I</original>
    <variation>T</variation>
    <location>
        <position position="512"/>
    </location>
</feature>
<feature type="sequence conflict" description="In Ref. 1; ACY07616." evidence="8" ref="1">
    <original>N</original>
    <variation>D</variation>
    <location>
        <position position="722"/>
    </location>
</feature>
<feature type="sequence conflict" description="In Ref. 1; ACY07616." evidence="8" ref="1">
    <original>L</original>
    <variation>F</variation>
    <location>
        <position position="747"/>
    </location>
</feature>
<gene>
    <name evidence="6" type="primary">SIK1</name>
    <name evidence="7" type="synonym">ER2</name>
    <name evidence="8" type="synonym">ERL</name>
    <name evidence="9" type="synonym">PK3</name>
    <name evidence="12" type="ordered locus">Os06g0130100</name>
    <name evidence="8" type="ordered locus">LOC_Os06g03970</name>
    <name evidence="11" type="ORF">P0493C11.1</name>
    <name evidence="10" type="ORF">P0538C01.27</name>
</gene>
<sequence>MAAARAPWLWWWVVVVVGVAVAEAASGGGGGGDGEGKALMGVKAGFGNAANALVDWDGGADHCAWRGVTCDNASFAVLALNLSNLNLGGEISPAIGELKNLQFVDLKGNKLTGQIPDEIGDCISLKYLDLSGNLLYGDIPFSISKLKQLEELILKNNQLTGPIPSTLSQIPNLKTLDLAQNQLTGDIPRLIYWNEVLQYLGLRGNSLTGTLSPDMCQLTGLWYFDVRGNNLTGTIPESIGNCTSFEILDISYNQISGEIPYNIGFLQVATLSLQGNRLTGKIPDVIGLMQALAVLDLSENELVGPIPSILGNLSYTGKLYLHGNKLTGVIPPELGNMSKLSYLQLNDNELVGTIPAELGKLEELFELNLANNNLQGPIPANISSCTALNKFNVYGNKLNGSIPAGFQKLESLTYLNLSSNNFKGNIPSELGHIINLDTLDLSYNEFSGPVPATIGDLEHLLELNLSKNHLDGPVPAEFGNLRSVQVIDMSNNNLSGSLPEELGQLQNLDSLILNNNNLVGEIPAQLANCFSLNNLNLSYNNLSGHVPMAKNFSKFPMESFLGNPLLHVYCQDSSCGHSHGQRVNISKTAIACIILGFIILLCVLLLAIYKTNQPQPLVKGSDKPVQGPPKLVVLQMDMAIHTYEDIMRLTENLSEKYIIGYGASSTVYKCELKSGKAIAVKRLYSQYNHSLREFETELETIGSIRHRNLVSLHGFSLSPHGNLLFYDYMENGSLWDLLHGPSKKVKLNWDTRLRIAVGAAQGLAYLHHDCNPRIIHRDVKSSNILLDENFEAHLSDFGIAKCVPSAKSHASTYVLGTIGYIDPEYARTSRLNEKSDVYSFGIVLLELLTGKKAVDNESNLHQLILSKADDNTVMEAVDSEVSVTCTDMGLVRKAFQLALLCTKRHPSDRPTMHEVARVLLSLLPASAMTTPKTVDYSRLLASTTTAADMRGHDVTDIGDNSSSDEQWFVRFGEVISKHTM</sequence>
<keyword id="KW-0025">Alternative splicing</keyword>
<keyword id="KW-0067">ATP-binding</keyword>
<keyword id="KW-1003">Cell membrane</keyword>
<keyword id="KW-0325">Glycoprotein</keyword>
<keyword id="KW-0418">Kinase</keyword>
<keyword id="KW-0433">Leucine-rich repeat</keyword>
<keyword id="KW-0472">Membrane</keyword>
<keyword id="KW-0547">Nucleotide-binding</keyword>
<keyword id="KW-0675">Receptor</keyword>
<keyword id="KW-1185">Reference proteome</keyword>
<keyword id="KW-0677">Repeat</keyword>
<keyword id="KW-0723">Serine/threonine-protein kinase</keyword>
<keyword id="KW-0732">Signal</keyword>
<keyword id="KW-0346">Stress response</keyword>
<keyword id="KW-0808">Transferase</keyword>
<keyword id="KW-0812">Transmembrane</keyword>
<keyword id="KW-1133">Transmembrane helix</keyword>
<accession>Q658G7</accession>
<accession>D0U6M6</accession>
<accession>Q7XB99</accession>
<comment type="function">
    <text evidence="4 5">Receptor kinase involved in salt drought stress responses (PubMed:20128882). Acts as a positive regulator of salt and drought tolerance (PubMed:20128882). May promote salt and drought tolerance through the induction of the activities of antioxidative enzymes, such as peroxidase, superoxide dismutase and catalase (PubMed:20128882). May be involved in the control of stomatal development in leaf epidermis (PubMed:20128882). Possesses kinase activity in vitro (PubMed:20128882). Does not seem to be involved in heat tolerance (PubMed:26280413).</text>
</comment>
<comment type="catalytic activity">
    <reaction evidence="4">
        <text>L-seryl-[protein] + ATP = O-phospho-L-seryl-[protein] + ADP + H(+)</text>
        <dbReference type="Rhea" id="RHEA:17989"/>
        <dbReference type="Rhea" id="RHEA-COMP:9863"/>
        <dbReference type="Rhea" id="RHEA-COMP:11604"/>
        <dbReference type="ChEBI" id="CHEBI:15378"/>
        <dbReference type="ChEBI" id="CHEBI:29999"/>
        <dbReference type="ChEBI" id="CHEBI:30616"/>
        <dbReference type="ChEBI" id="CHEBI:83421"/>
        <dbReference type="ChEBI" id="CHEBI:456216"/>
        <dbReference type="EC" id="2.7.11.1"/>
    </reaction>
    <physiologicalReaction direction="left-to-right" evidence="4">
        <dbReference type="Rhea" id="RHEA:17990"/>
    </physiologicalReaction>
</comment>
<comment type="catalytic activity">
    <reaction evidence="4">
        <text>L-threonyl-[protein] + ATP = O-phospho-L-threonyl-[protein] + ADP + H(+)</text>
        <dbReference type="Rhea" id="RHEA:46608"/>
        <dbReference type="Rhea" id="RHEA-COMP:11060"/>
        <dbReference type="Rhea" id="RHEA-COMP:11605"/>
        <dbReference type="ChEBI" id="CHEBI:15378"/>
        <dbReference type="ChEBI" id="CHEBI:30013"/>
        <dbReference type="ChEBI" id="CHEBI:30616"/>
        <dbReference type="ChEBI" id="CHEBI:61977"/>
        <dbReference type="ChEBI" id="CHEBI:456216"/>
        <dbReference type="EC" id="2.7.11.1"/>
    </reaction>
    <physiologicalReaction direction="left-to-right" evidence="4">
        <dbReference type="Rhea" id="RHEA:46609"/>
    </physiologicalReaction>
</comment>
<comment type="subcellular location">
    <subcellularLocation>
        <location evidence="1">Cell membrane</location>
        <topology evidence="1">Single-pass type I membrane protein</topology>
    </subcellularLocation>
</comment>
<comment type="alternative products">
    <event type="alternative splicing"/>
    <isoform>
        <id>Q658G7-1</id>
        <name>1</name>
        <sequence type="displayed"/>
    </isoform>
    <isoform>
        <id>Q658G7-2</id>
        <name>2</name>
        <sequence type="described" ref="VSP_060408"/>
    </isoform>
</comment>
<comment type="tissue specificity">
    <text evidence="4">Expressed in nodes, vascular bundles of stems, and anthers.</text>
</comment>
<comment type="induction">
    <text evidence="4">Induced by salt and drought stresses, and hydrogen peroxide.</text>
</comment>
<comment type="PTM">
    <text evidence="4">Autophosphorylated.</text>
</comment>
<comment type="disruption phenotype">
    <text evidence="4">Normal growth, but increased number of stomata in adaxial and abaxial leaf epidermis (PubMed:20128882). Increased sensitivity to salt and drought stresses (PubMed:20128882).</text>
</comment>
<comment type="similarity">
    <text evidence="8">Belongs to the protein kinase superfamily. Ser/Thr protein kinase family.</text>
</comment>
<dbReference type="EC" id="2.7.11.1" evidence="4"/>
<dbReference type="EMBL" id="GQ423058">
    <property type="protein sequence ID" value="ACY07616.1"/>
    <property type="molecule type" value="mRNA"/>
</dbReference>
<dbReference type="EMBL" id="AY332474">
    <property type="protein sequence ID" value="AAQ01160.1"/>
    <property type="molecule type" value="mRNA"/>
</dbReference>
<dbReference type="EMBL" id="AP000391">
    <property type="protein sequence ID" value="BAD44800.1"/>
    <property type="molecule type" value="Genomic_DNA"/>
</dbReference>
<dbReference type="EMBL" id="AP000559">
    <property type="protein sequence ID" value="BAD67663.1"/>
    <property type="molecule type" value="Genomic_DNA"/>
</dbReference>
<dbReference type="EMBL" id="AP008212">
    <property type="protein sequence ID" value="BAF18601.1"/>
    <property type="molecule type" value="Genomic_DNA"/>
</dbReference>
<dbReference type="EMBL" id="AP014962">
    <property type="protein sequence ID" value="BAS95970.1"/>
    <property type="molecule type" value="Genomic_DNA"/>
</dbReference>
<dbReference type="EMBL" id="AP014962">
    <property type="protein sequence ID" value="BAS95971.1"/>
    <property type="molecule type" value="Genomic_DNA"/>
</dbReference>
<dbReference type="RefSeq" id="XP_015641250.1">
    <molecule id="Q658G7-1"/>
    <property type="nucleotide sequence ID" value="XM_015785764.1"/>
</dbReference>
<dbReference type="SMR" id="Q658G7"/>
<dbReference type="FunCoup" id="Q658G7">
    <property type="interactions" value="743"/>
</dbReference>
<dbReference type="STRING" id="39947.Q658G7"/>
<dbReference type="GlyCosmos" id="Q658G7">
    <property type="glycosylation" value="15 sites, No reported glycans"/>
</dbReference>
<dbReference type="PaxDb" id="39947-Q658G7"/>
<dbReference type="EnsemblPlants" id="Os06t0130100-01">
    <molecule id="Q658G7-1"/>
    <property type="protein sequence ID" value="Os06t0130100-01"/>
    <property type="gene ID" value="Os06g0130100"/>
</dbReference>
<dbReference type="GeneID" id="4340000"/>
<dbReference type="Gramene" id="Os06t0130100-01">
    <molecule id="Q658G7-1"/>
    <property type="protein sequence ID" value="Os06t0130100-01"/>
    <property type="gene ID" value="Os06g0130100"/>
</dbReference>
<dbReference type="KEGG" id="dosa:Os06g0130100"/>
<dbReference type="KEGG" id="osa:4340000"/>
<dbReference type="eggNOG" id="ENOG502QTEP">
    <property type="taxonomic scope" value="Eukaryota"/>
</dbReference>
<dbReference type="HOGENOM" id="CLU_000288_22_1_1"/>
<dbReference type="InParanoid" id="Q658G7"/>
<dbReference type="OMA" id="YKSNQPK"/>
<dbReference type="OrthoDB" id="676979at2759"/>
<dbReference type="Proteomes" id="UP000000763">
    <property type="component" value="Chromosome 6"/>
</dbReference>
<dbReference type="Proteomes" id="UP000059680">
    <property type="component" value="Chromosome 6"/>
</dbReference>
<dbReference type="ExpressionAtlas" id="Q658G7">
    <property type="expression patterns" value="baseline and differential"/>
</dbReference>
<dbReference type="GO" id="GO:0016020">
    <property type="term" value="C:membrane"/>
    <property type="evidence" value="ECO:0000318"/>
    <property type="project" value="GO_Central"/>
</dbReference>
<dbReference type="GO" id="GO:0005886">
    <property type="term" value="C:plasma membrane"/>
    <property type="evidence" value="ECO:0007669"/>
    <property type="project" value="UniProtKB-SubCell"/>
</dbReference>
<dbReference type="GO" id="GO:0005524">
    <property type="term" value="F:ATP binding"/>
    <property type="evidence" value="ECO:0007669"/>
    <property type="project" value="UniProtKB-KW"/>
</dbReference>
<dbReference type="GO" id="GO:0106310">
    <property type="term" value="F:protein serine kinase activity"/>
    <property type="evidence" value="ECO:0007669"/>
    <property type="project" value="RHEA"/>
</dbReference>
<dbReference type="GO" id="GO:0033612">
    <property type="term" value="F:receptor serine/threonine kinase binding"/>
    <property type="evidence" value="ECO:0000318"/>
    <property type="project" value="GO_Central"/>
</dbReference>
<dbReference type="GO" id="GO:0004675">
    <property type="term" value="F:transmembrane receptor protein serine/threonine kinase activity"/>
    <property type="evidence" value="ECO:0000314"/>
    <property type="project" value="UniProtKB"/>
</dbReference>
<dbReference type="GO" id="GO:0009553">
    <property type="term" value="P:embryo sac development"/>
    <property type="evidence" value="ECO:0000318"/>
    <property type="project" value="GO_Central"/>
</dbReference>
<dbReference type="GO" id="GO:0048481">
    <property type="term" value="P:plant ovule development"/>
    <property type="evidence" value="ECO:0000318"/>
    <property type="project" value="GO_Central"/>
</dbReference>
<dbReference type="GO" id="GO:1901002">
    <property type="term" value="P:positive regulation of response to salt stress"/>
    <property type="evidence" value="ECO:0000315"/>
    <property type="project" value="UniProtKB"/>
</dbReference>
<dbReference type="GO" id="GO:1902584">
    <property type="term" value="P:positive regulation of response to water deprivation"/>
    <property type="evidence" value="ECO:0000315"/>
    <property type="project" value="UniProtKB"/>
</dbReference>
<dbReference type="GO" id="GO:2000038">
    <property type="term" value="P:regulation of stomatal complex development"/>
    <property type="evidence" value="ECO:0000315"/>
    <property type="project" value="UniProtKB"/>
</dbReference>
<dbReference type="GO" id="GO:0010103">
    <property type="term" value="P:stomatal complex morphogenesis"/>
    <property type="evidence" value="ECO:0000318"/>
    <property type="project" value="GO_Central"/>
</dbReference>
<dbReference type="CDD" id="cd14066">
    <property type="entry name" value="STKc_IRAK"/>
    <property type="match status" value="1"/>
</dbReference>
<dbReference type="FunFam" id="1.10.510.10:FF:000290">
    <property type="entry name" value="LRR receptor-like serine/threonine-protein kinase ERECTA"/>
    <property type="match status" value="1"/>
</dbReference>
<dbReference type="FunFam" id="3.30.200.20:FF:000288">
    <property type="entry name" value="LRR receptor-like serine/threonine-protein kinase ERECTA"/>
    <property type="match status" value="1"/>
</dbReference>
<dbReference type="FunFam" id="3.80.10.10:FF:000077">
    <property type="entry name" value="LRR receptor-like serine/threonine-protein kinase ERL1"/>
    <property type="match status" value="1"/>
</dbReference>
<dbReference type="FunFam" id="3.80.10.10:FF:000107">
    <property type="entry name" value="LRR receptor-like serine/threonine-protein kinase ERL1"/>
    <property type="match status" value="1"/>
</dbReference>
<dbReference type="FunFam" id="3.80.10.10:FF:000219">
    <property type="entry name" value="LRR receptor-like serine/threonine-protein kinase ERL1"/>
    <property type="match status" value="1"/>
</dbReference>
<dbReference type="Gene3D" id="3.30.200.20">
    <property type="entry name" value="Phosphorylase Kinase, domain 1"/>
    <property type="match status" value="1"/>
</dbReference>
<dbReference type="Gene3D" id="3.80.10.10">
    <property type="entry name" value="Ribonuclease Inhibitor"/>
    <property type="match status" value="3"/>
</dbReference>
<dbReference type="Gene3D" id="1.10.510.10">
    <property type="entry name" value="Transferase(Phosphotransferase) domain 1"/>
    <property type="match status" value="1"/>
</dbReference>
<dbReference type="InterPro" id="IPR011009">
    <property type="entry name" value="Kinase-like_dom_sf"/>
</dbReference>
<dbReference type="InterPro" id="IPR001611">
    <property type="entry name" value="Leu-rich_rpt"/>
</dbReference>
<dbReference type="InterPro" id="IPR003591">
    <property type="entry name" value="Leu-rich_rpt_typical-subtyp"/>
</dbReference>
<dbReference type="InterPro" id="IPR032675">
    <property type="entry name" value="LRR_dom_sf"/>
</dbReference>
<dbReference type="InterPro" id="IPR013210">
    <property type="entry name" value="LRR_N_plant-typ"/>
</dbReference>
<dbReference type="InterPro" id="IPR050647">
    <property type="entry name" value="Plant_LRR-RLKs"/>
</dbReference>
<dbReference type="InterPro" id="IPR000719">
    <property type="entry name" value="Prot_kinase_dom"/>
</dbReference>
<dbReference type="InterPro" id="IPR017441">
    <property type="entry name" value="Protein_kinase_ATP_BS"/>
</dbReference>
<dbReference type="InterPro" id="IPR008271">
    <property type="entry name" value="Ser/Thr_kinase_AS"/>
</dbReference>
<dbReference type="PANTHER" id="PTHR48056">
    <property type="entry name" value="LRR RECEPTOR-LIKE SERINE/THREONINE-PROTEIN KINASE-RELATED"/>
    <property type="match status" value="1"/>
</dbReference>
<dbReference type="PANTHER" id="PTHR48056:SF34">
    <property type="entry name" value="LRR RECEPTOR-LIKE SERINE_THREONINE-PROTEIN KINASE ERL1"/>
    <property type="match status" value="1"/>
</dbReference>
<dbReference type="Pfam" id="PF00560">
    <property type="entry name" value="LRR_1"/>
    <property type="match status" value="7"/>
</dbReference>
<dbReference type="Pfam" id="PF13855">
    <property type="entry name" value="LRR_8"/>
    <property type="match status" value="3"/>
</dbReference>
<dbReference type="Pfam" id="PF08263">
    <property type="entry name" value="LRRNT_2"/>
    <property type="match status" value="1"/>
</dbReference>
<dbReference type="Pfam" id="PF00069">
    <property type="entry name" value="Pkinase"/>
    <property type="match status" value="1"/>
</dbReference>
<dbReference type="SMART" id="SM00369">
    <property type="entry name" value="LRR_TYP"/>
    <property type="match status" value="9"/>
</dbReference>
<dbReference type="SMART" id="SM00220">
    <property type="entry name" value="S_TKc"/>
    <property type="match status" value="1"/>
</dbReference>
<dbReference type="SUPFAM" id="SSF52058">
    <property type="entry name" value="L domain-like"/>
    <property type="match status" value="2"/>
</dbReference>
<dbReference type="SUPFAM" id="SSF56112">
    <property type="entry name" value="Protein kinase-like (PK-like)"/>
    <property type="match status" value="1"/>
</dbReference>
<dbReference type="PROSITE" id="PS51450">
    <property type="entry name" value="LRR"/>
    <property type="match status" value="15"/>
</dbReference>
<dbReference type="PROSITE" id="PS00107">
    <property type="entry name" value="PROTEIN_KINASE_ATP"/>
    <property type="match status" value="1"/>
</dbReference>
<dbReference type="PROSITE" id="PS50011">
    <property type="entry name" value="PROTEIN_KINASE_DOM"/>
    <property type="match status" value="1"/>
</dbReference>
<dbReference type="PROSITE" id="PS00108">
    <property type="entry name" value="PROTEIN_KINASE_ST"/>
    <property type="match status" value="1"/>
</dbReference>